<accession>P0CU23</accession>
<accession>A0AAN2H7F6</accession>
<protein>
    <recommendedName>
        <fullName evidence="2">Uncharacterized protein SPAPB1A11.06</fullName>
    </recommendedName>
</protein>
<proteinExistence type="predicted"/>
<dbReference type="EMBL" id="CU329670">
    <property type="protein sequence ID" value="CAK9838235.1"/>
    <property type="molecule type" value="Genomic_DNA"/>
</dbReference>
<dbReference type="SMR" id="P0CU23"/>
<dbReference type="PomBase" id="SPAPB1A11.06"/>
<dbReference type="VEuPathDB" id="FungiDB:SPAPB1A11.05"/>
<dbReference type="InParanoid" id="P0CU23"/>
<dbReference type="PRO" id="PR:P0CU23"/>
<dbReference type="Proteomes" id="UP000002485">
    <property type="component" value="Chromosome I"/>
</dbReference>
<reference key="1">
    <citation type="journal article" date="2002" name="Nature">
        <title>The genome sequence of Schizosaccharomyces pombe.</title>
        <authorList>
            <person name="Wood V."/>
            <person name="Gwilliam R."/>
            <person name="Rajandream M.A."/>
            <person name="Lyne M.H."/>
            <person name="Lyne R."/>
            <person name="Stewart A."/>
            <person name="Sgouros J.G."/>
            <person name="Peat N."/>
            <person name="Hayles J."/>
            <person name="Baker S.G."/>
            <person name="Basham D."/>
            <person name="Bowman S."/>
            <person name="Brooks K."/>
            <person name="Brown D."/>
            <person name="Brown S."/>
            <person name="Chillingworth T."/>
            <person name="Churcher C.M."/>
            <person name="Collins M."/>
            <person name="Connor R."/>
            <person name="Cronin A."/>
            <person name="Davis P."/>
            <person name="Feltwell T."/>
            <person name="Fraser A."/>
            <person name="Gentles S."/>
            <person name="Goble A."/>
            <person name="Hamlin N."/>
            <person name="Harris D.E."/>
            <person name="Hidalgo J."/>
            <person name="Hodgson G."/>
            <person name="Holroyd S."/>
            <person name="Hornsby T."/>
            <person name="Howarth S."/>
            <person name="Huckle E.J."/>
            <person name="Hunt S."/>
            <person name="Jagels K."/>
            <person name="James K.D."/>
            <person name="Jones L."/>
            <person name="Jones M."/>
            <person name="Leather S."/>
            <person name="McDonald S."/>
            <person name="McLean J."/>
            <person name="Mooney P."/>
            <person name="Moule S."/>
            <person name="Mungall K.L."/>
            <person name="Murphy L.D."/>
            <person name="Niblett D."/>
            <person name="Odell C."/>
            <person name="Oliver K."/>
            <person name="O'Neil S."/>
            <person name="Pearson D."/>
            <person name="Quail M.A."/>
            <person name="Rabbinowitsch E."/>
            <person name="Rutherford K.M."/>
            <person name="Rutter S."/>
            <person name="Saunders D."/>
            <person name="Seeger K."/>
            <person name="Sharp S."/>
            <person name="Skelton J."/>
            <person name="Simmonds M.N."/>
            <person name="Squares R."/>
            <person name="Squares S."/>
            <person name="Stevens K."/>
            <person name="Taylor K."/>
            <person name="Taylor R.G."/>
            <person name="Tivey A."/>
            <person name="Walsh S.V."/>
            <person name="Warren T."/>
            <person name="Whitehead S."/>
            <person name="Woodward J.R."/>
            <person name="Volckaert G."/>
            <person name="Aert R."/>
            <person name="Robben J."/>
            <person name="Grymonprez B."/>
            <person name="Weltjens I."/>
            <person name="Vanstreels E."/>
            <person name="Rieger M."/>
            <person name="Schaefer M."/>
            <person name="Mueller-Auer S."/>
            <person name="Gabel C."/>
            <person name="Fuchs M."/>
            <person name="Duesterhoeft A."/>
            <person name="Fritzc C."/>
            <person name="Holzer E."/>
            <person name="Moestl D."/>
            <person name="Hilbert H."/>
            <person name="Borzym K."/>
            <person name="Langer I."/>
            <person name="Beck A."/>
            <person name="Lehrach H."/>
            <person name="Reinhardt R."/>
            <person name="Pohl T.M."/>
            <person name="Eger P."/>
            <person name="Zimmermann W."/>
            <person name="Wedler H."/>
            <person name="Wambutt R."/>
            <person name="Purnelle B."/>
            <person name="Goffeau A."/>
            <person name="Cadieu E."/>
            <person name="Dreano S."/>
            <person name="Gloux S."/>
            <person name="Lelaure V."/>
            <person name="Mottier S."/>
            <person name="Galibert F."/>
            <person name="Aves S.J."/>
            <person name="Xiang Z."/>
            <person name="Hunt C."/>
            <person name="Moore K."/>
            <person name="Hurst S.M."/>
            <person name="Lucas M."/>
            <person name="Rochet M."/>
            <person name="Gaillardin C."/>
            <person name="Tallada V.A."/>
            <person name="Garzon A."/>
            <person name="Thode G."/>
            <person name="Daga R.R."/>
            <person name="Cruzado L."/>
            <person name="Jimenez J."/>
            <person name="Sanchez M."/>
            <person name="del Rey F."/>
            <person name="Benito J."/>
            <person name="Dominguez A."/>
            <person name="Revuelta J.L."/>
            <person name="Moreno S."/>
            <person name="Armstrong J."/>
            <person name="Forsburg S.L."/>
            <person name="Cerutti L."/>
            <person name="Lowe T."/>
            <person name="McCombie W.R."/>
            <person name="Paulsen I."/>
            <person name="Potashkin J."/>
            <person name="Shpakovski G.V."/>
            <person name="Ussery D."/>
            <person name="Barrell B.G."/>
            <person name="Nurse P."/>
        </authorList>
    </citation>
    <scope>NUCLEOTIDE SEQUENCE [LARGE SCALE GENOMIC DNA]</scope>
    <source>
        <strain>972 / ATCC 24843</strain>
    </source>
</reference>
<reference key="2">
    <citation type="journal article" date="2015" name="DNA Res.">
        <title>AnABlast: a new in silico strategy for the genome-wide search of novel genes and fossil regions.</title>
        <authorList>
            <person name="Jimenez J."/>
            <person name="Duncan C.D."/>
            <person name="Gallardo M."/>
            <person name="Mata J."/>
            <person name="Perez-Pulido A.J."/>
        </authorList>
    </citation>
    <scope>IDENTIFICATION</scope>
</reference>
<gene>
    <name evidence="3" type="ORF">SPAPB1A11.06</name>
</gene>
<organism>
    <name type="scientific">Schizosaccharomyces pombe (strain 972 / ATCC 24843)</name>
    <name type="common">Fission yeast</name>
    <dbReference type="NCBI Taxonomy" id="284812"/>
    <lineage>
        <taxon>Eukaryota</taxon>
        <taxon>Fungi</taxon>
        <taxon>Dikarya</taxon>
        <taxon>Ascomycota</taxon>
        <taxon>Taphrinomycotina</taxon>
        <taxon>Schizosaccharomycetes</taxon>
        <taxon>Schizosaccharomycetales</taxon>
        <taxon>Schizosaccharomycetaceae</taxon>
        <taxon>Schizosaccharomyces</taxon>
    </lineage>
</organism>
<keyword id="KW-1185">Reference proteome</keyword>
<evidence type="ECO:0000256" key="1">
    <source>
        <dbReference type="SAM" id="MobiDB-lite"/>
    </source>
</evidence>
<evidence type="ECO:0000305" key="2"/>
<evidence type="ECO:0000312" key="3">
    <source>
        <dbReference type="PomBase" id="SPAPB1A11.06"/>
    </source>
</evidence>
<sequence>MTTGKPQSFEKMRTPFPGRSKAKGPQSDIIPSAPPNTPVTEH</sequence>
<name>YKN6_SCHPO</name>
<feature type="chain" id="PRO_0000437263" description="Uncharacterized protein SPAPB1A11.06">
    <location>
        <begin position="1"/>
        <end position="42"/>
    </location>
</feature>
<feature type="region of interest" description="Disordered" evidence="1">
    <location>
        <begin position="1"/>
        <end position="42"/>
    </location>
</feature>
<feature type="compositionally biased region" description="Pro residues" evidence="1">
    <location>
        <begin position="32"/>
        <end position="42"/>
    </location>
</feature>